<dbReference type="EMBL" id="CP000438">
    <property type="protein sequence ID" value="ABJ11964.1"/>
    <property type="molecule type" value="Genomic_DNA"/>
</dbReference>
<dbReference type="RefSeq" id="WP_003090661.1">
    <property type="nucleotide sequence ID" value="NZ_CP034244.1"/>
</dbReference>
<dbReference type="PDB" id="8FLJ">
    <property type="method" value="EM"/>
    <property type="resolution" value="3.48 A"/>
    <property type="chains" value="E/G=1-100"/>
</dbReference>
<dbReference type="PDBsum" id="8FLJ"/>
<dbReference type="EMDB" id="EMD-29280"/>
<dbReference type="SMR" id="Q02NN5"/>
<dbReference type="GeneID" id="79913052"/>
<dbReference type="KEGG" id="pau:PA14_28720"/>
<dbReference type="PseudoCAP" id="PA14_28720"/>
<dbReference type="HOGENOM" id="CLU_105066_1_3_6"/>
<dbReference type="BioCyc" id="PAER208963:G1G74-2402-MONOMER"/>
<dbReference type="Proteomes" id="UP000000653">
    <property type="component" value="Chromosome"/>
</dbReference>
<dbReference type="GO" id="GO:0005829">
    <property type="term" value="C:cytosol"/>
    <property type="evidence" value="ECO:0007669"/>
    <property type="project" value="TreeGrafter"/>
</dbReference>
<dbReference type="GO" id="GO:0003677">
    <property type="term" value="F:DNA binding"/>
    <property type="evidence" value="ECO:0007669"/>
    <property type="project" value="UniProtKB-UniRule"/>
</dbReference>
<dbReference type="GO" id="GO:0030527">
    <property type="term" value="F:structural constituent of chromatin"/>
    <property type="evidence" value="ECO:0007669"/>
    <property type="project" value="InterPro"/>
</dbReference>
<dbReference type="GO" id="GO:0006310">
    <property type="term" value="P:DNA recombination"/>
    <property type="evidence" value="ECO:0007669"/>
    <property type="project" value="UniProtKB-UniRule"/>
</dbReference>
<dbReference type="GO" id="GO:0009893">
    <property type="term" value="P:positive regulation of metabolic process"/>
    <property type="evidence" value="ECO:0007669"/>
    <property type="project" value="UniProtKB-ARBA"/>
</dbReference>
<dbReference type="GO" id="GO:0006355">
    <property type="term" value="P:regulation of DNA-templated transcription"/>
    <property type="evidence" value="ECO:0007669"/>
    <property type="project" value="UniProtKB-UniRule"/>
</dbReference>
<dbReference type="GO" id="GO:0006417">
    <property type="term" value="P:regulation of translation"/>
    <property type="evidence" value="ECO:0007669"/>
    <property type="project" value="UniProtKB-UniRule"/>
</dbReference>
<dbReference type="CDD" id="cd13835">
    <property type="entry name" value="IHF_A"/>
    <property type="match status" value="1"/>
</dbReference>
<dbReference type="FunFam" id="4.10.520.10:FF:000002">
    <property type="entry name" value="Integration host factor subunit alpha"/>
    <property type="match status" value="1"/>
</dbReference>
<dbReference type="Gene3D" id="4.10.520.10">
    <property type="entry name" value="IHF-like DNA-binding proteins"/>
    <property type="match status" value="1"/>
</dbReference>
<dbReference type="HAMAP" id="MF_00380">
    <property type="entry name" value="IHF_alpha"/>
    <property type="match status" value="1"/>
</dbReference>
<dbReference type="InterPro" id="IPR000119">
    <property type="entry name" value="Hist_DNA-bd"/>
</dbReference>
<dbReference type="InterPro" id="IPR020816">
    <property type="entry name" value="Histone-like_DNA-bd_CS"/>
</dbReference>
<dbReference type="InterPro" id="IPR010992">
    <property type="entry name" value="IHF-like_DNA-bd_dom_sf"/>
</dbReference>
<dbReference type="InterPro" id="IPR005684">
    <property type="entry name" value="IHF_alpha"/>
</dbReference>
<dbReference type="NCBIfam" id="TIGR00987">
    <property type="entry name" value="himA"/>
    <property type="match status" value="1"/>
</dbReference>
<dbReference type="NCBIfam" id="NF001401">
    <property type="entry name" value="PRK00285.1"/>
    <property type="match status" value="1"/>
</dbReference>
<dbReference type="PANTHER" id="PTHR33175">
    <property type="entry name" value="DNA-BINDING PROTEIN HU"/>
    <property type="match status" value="1"/>
</dbReference>
<dbReference type="PANTHER" id="PTHR33175:SF2">
    <property type="entry name" value="INTEGRATION HOST FACTOR SUBUNIT ALPHA"/>
    <property type="match status" value="1"/>
</dbReference>
<dbReference type="Pfam" id="PF00216">
    <property type="entry name" value="Bac_DNA_binding"/>
    <property type="match status" value="1"/>
</dbReference>
<dbReference type="PRINTS" id="PR01727">
    <property type="entry name" value="DNABINDINGHU"/>
</dbReference>
<dbReference type="SMART" id="SM00411">
    <property type="entry name" value="BHL"/>
    <property type="match status" value="1"/>
</dbReference>
<dbReference type="SUPFAM" id="SSF47729">
    <property type="entry name" value="IHF-like DNA-binding proteins"/>
    <property type="match status" value="1"/>
</dbReference>
<dbReference type="PROSITE" id="PS00045">
    <property type="entry name" value="HISTONE_LIKE"/>
    <property type="match status" value="1"/>
</dbReference>
<protein>
    <recommendedName>
        <fullName evidence="1">Integration host factor subunit alpha</fullName>
        <shortName evidence="1">IHF-alpha</shortName>
    </recommendedName>
</protein>
<proteinExistence type="evidence at protein level"/>
<name>IHFA_PSEAB</name>
<sequence length="100" mass="11471">MGALTKAEIAERLYEELGLNKREAKELVELFFEEIRQALEHNEQVKLSGFGNFDLRDKRQRPGRNPKTGEEIPITARRVVTFRPGQKLKARVEAYAGTKS</sequence>
<organism>
    <name type="scientific">Pseudomonas aeruginosa (strain UCBPP-PA14)</name>
    <dbReference type="NCBI Taxonomy" id="208963"/>
    <lineage>
        <taxon>Bacteria</taxon>
        <taxon>Pseudomonadati</taxon>
        <taxon>Pseudomonadota</taxon>
        <taxon>Gammaproteobacteria</taxon>
        <taxon>Pseudomonadales</taxon>
        <taxon>Pseudomonadaceae</taxon>
        <taxon>Pseudomonas</taxon>
    </lineage>
</organism>
<evidence type="ECO:0000255" key="1">
    <source>
        <dbReference type="HAMAP-Rule" id="MF_00380"/>
    </source>
</evidence>
<evidence type="ECO:0000256" key="2">
    <source>
        <dbReference type="SAM" id="MobiDB-lite"/>
    </source>
</evidence>
<evidence type="ECO:0007829" key="3">
    <source>
        <dbReference type="PDB" id="8FLJ"/>
    </source>
</evidence>
<keyword id="KW-0002">3D-structure</keyword>
<keyword id="KW-0233">DNA recombination</keyword>
<keyword id="KW-0238">DNA-binding</keyword>
<keyword id="KW-0804">Transcription</keyword>
<keyword id="KW-0805">Transcription regulation</keyword>
<keyword id="KW-0810">Translation regulation</keyword>
<gene>
    <name evidence="1" type="primary">ihfA</name>
    <name evidence="1" type="synonym">himA</name>
    <name type="ordered locus">PA14_28720</name>
</gene>
<feature type="chain" id="PRO_0000277756" description="Integration host factor subunit alpha">
    <location>
        <begin position="1"/>
        <end position="100"/>
    </location>
</feature>
<feature type="region of interest" description="Disordered" evidence="2">
    <location>
        <begin position="54"/>
        <end position="73"/>
    </location>
</feature>
<feature type="helix" evidence="3">
    <location>
        <begin position="6"/>
        <end position="17"/>
    </location>
</feature>
<feature type="helix" evidence="3">
    <location>
        <begin position="21"/>
        <end position="40"/>
    </location>
</feature>
<feature type="strand" evidence="3">
    <location>
        <begin position="45"/>
        <end position="47"/>
    </location>
</feature>
<feature type="turn" evidence="3">
    <location>
        <begin position="48"/>
        <end position="50"/>
    </location>
</feature>
<feature type="strand" evidence="3">
    <location>
        <begin position="51"/>
        <end position="57"/>
    </location>
</feature>
<feature type="turn" evidence="3">
    <location>
        <begin position="66"/>
        <end position="68"/>
    </location>
</feature>
<feature type="strand" evidence="3">
    <location>
        <begin position="78"/>
        <end position="84"/>
    </location>
</feature>
<feature type="helix" evidence="3">
    <location>
        <begin position="86"/>
        <end position="92"/>
    </location>
</feature>
<accession>Q02NN5</accession>
<comment type="function">
    <text evidence="1">This protein is one of the two subunits of integration host factor, a specific DNA-binding protein that functions in genetic recombination as well as in transcriptional and translational control.</text>
</comment>
<comment type="subunit">
    <text evidence="1">Heterodimer of an alpha and a beta chain.</text>
</comment>
<comment type="similarity">
    <text evidence="1">Belongs to the bacterial histone-like protein family.</text>
</comment>
<reference key="1">
    <citation type="journal article" date="2006" name="Genome Biol.">
        <title>Genomic analysis reveals that Pseudomonas aeruginosa virulence is combinatorial.</title>
        <authorList>
            <person name="Lee D.G."/>
            <person name="Urbach J.M."/>
            <person name="Wu G."/>
            <person name="Liberati N.T."/>
            <person name="Feinbaum R.L."/>
            <person name="Miyata S."/>
            <person name="Diggins L.T."/>
            <person name="He J."/>
            <person name="Saucier M."/>
            <person name="Deziel E."/>
            <person name="Friedman L."/>
            <person name="Li L."/>
            <person name="Grills G."/>
            <person name="Montgomery K."/>
            <person name="Kucherlapati R."/>
            <person name="Rahme L.G."/>
            <person name="Ausubel F.M."/>
        </authorList>
    </citation>
    <scope>NUCLEOTIDE SEQUENCE [LARGE SCALE GENOMIC DNA]</scope>
    <source>
        <strain>UCBPP-PA14</strain>
    </source>
</reference>